<protein>
    <recommendedName>
        <fullName evidence="9">Mitotic deacetylase-associated SANT domain protein</fullName>
    </recommendedName>
    <alternativeName>
        <fullName>ELM2 and SANT domain-containing protein 1</fullName>
    </alternativeName>
</protein>
<comment type="subunit">
    <text evidence="5 6">Interacts with DNTTIP1 (PubMed:21573134, PubMed:25653165). Identified in a histone deacetylase complex that contains DNTTIP1, HDAC1 and MIDEAS; this complex assembles into a tetramer that contains four copies of each protein chain (PubMed:25653165).</text>
</comment>
<comment type="subcellular location">
    <subcellularLocation>
        <location evidence="1 2">Nucleus</location>
    </subcellularLocation>
</comment>
<comment type="sequence caution" evidence="8">
    <conflict type="erroneous initiation">
        <sequence resource="EMBL-CDS" id="AAH06511"/>
    </conflict>
    <text>Extended N-terminus.</text>
</comment>
<gene>
    <name evidence="7 9" type="primary">MIDEAS</name>
    <name evidence="9" type="synonym">C14orf117</name>
    <name evidence="9" type="synonym">C14orf43</name>
    <name evidence="9" type="synonym">ELMSAN1</name>
</gene>
<proteinExistence type="evidence at protein level"/>
<reference key="1">
    <citation type="journal article" date="2003" name="Nature">
        <title>The DNA sequence and analysis of human chromosome 14.</title>
        <authorList>
            <person name="Heilig R."/>
            <person name="Eckenberg R."/>
            <person name="Petit J.-L."/>
            <person name="Fonknechten N."/>
            <person name="Da Silva C."/>
            <person name="Cattolico L."/>
            <person name="Levy M."/>
            <person name="Barbe V."/>
            <person name="De Berardinis V."/>
            <person name="Ureta-Vidal A."/>
            <person name="Pelletier E."/>
            <person name="Vico V."/>
            <person name="Anthouard V."/>
            <person name="Rowen L."/>
            <person name="Madan A."/>
            <person name="Qin S."/>
            <person name="Sun H."/>
            <person name="Du H."/>
            <person name="Pepin K."/>
            <person name="Artiguenave F."/>
            <person name="Robert C."/>
            <person name="Cruaud C."/>
            <person name="Bruels T."/>
            <person name="Jaillon O."/>
            <person name="Friedlander L."/>
            <person name="Samson G."/>
            <person name="Brottier P."/>
            <person name="Cure S."/>
            <person name="Segurens B."/>
            <person name="Aniere F."/>
            <person name="Samain S."/>
            <person name="Crespeau H."/>
            <person name="Abbasi N."/>
            <person name="Aiach N."/>
            <person name="Boscus D."/>
            <person name="Dickhoff R."/>
            <person name="Dors M."/>
            <person name="Dubois I."/>
            <person name="Friedman C."/>
            <person name="Gouyvenoux M."/>
            <person name="James R."/>
            <person name="Madan A."/>
            <person name="Mairey-Estrada B."/>
            <person name="Mangenot S."/>
            <person name="Martins N."/>
            <person name="Menard M."/>
            <person name="Oztas S."/>
            <person name="Ratcliffe A."/>
            <person name="Shaffer T."/>
            <person name="Trask B."/>
            <person name="Vacherie B."/>
            <person name="Bellemere C."/>
            <person name="Belser C."/>
            <person name="Besnard-Gonnet M."/>
            <person name="Bartol-Mavel D."/>
            <person name="Boutard M."/>
            <person name="Briez-Silla S."/>
            <person name="Combette S."/>
            <person name="Dufosse-Laurent V."/>
            <person name="Ferron C."/>
            <person name="Lechaplais C."/>
            <person name="Louesse C."/>
            <person name="Muselet D."/>
            <person name="Magdelenat G."/>
            <person name="Pateau E."/>
            <person name="Petit E."/>
            <person name="Sirvain-Trukniewicz P."/>
            <person name="Trybou A."/>
            <person name="Vega-Czarny N."/>
            <person name="Bataille E."/>
            <person name="Bluet E."/>
            <person name="Bordelais I."/>
            <person name="Dubois M."/>
            <person name="Dumont C."/>
            <person name="Guerin T."/>
            <person name="Haffray S."/>
            <person name="Hammadi R."/>
            <person name="Muanga J."/>
            <person name="Pellouin V."/>
            <person name="Robert D."/>
            <person name="Wunderle E."/>
            <person name="Gauguet G."/>
            <person name="Roy A."/>
            <person name="Sainte-Marthe L."/>
            <person name="Verdier J."/>
            <person name="Verdier-Discala C."/>
            <person name="Hillier L.W."/>
            <person name="Fulton L."/>
            <person name="McPherson J."/>
            <person name="Matsuda F."/>
            <person name="Wilson R."/>
            <person name="Scarpelli C."/>
            <person name="Gyapay G."/>
            <person name="Wincker P."/>
            <person name="Saurin W."/>
            <person name="Quetier F."/>
            <person name="Waterston R."/>
            <person name="Hood L."/>
            <person name="Weissenbach J."/>
        </authorList>
    </citation>
    <scope>NUCLEOTIDE SEQUENCE [LARGE SCALE GENOMIC DNA]</scope>
</reference>
<reference key="2">
    <citation type="journal article" date="2004" name="Genome Res.">
        <title>The status, quality, and expansion of the NIH full-length cDNA project: the Mammalian Gene Collection (MGC).</title>
        <authorList>
            <consortium name="The MGC Project Team"/>
        </authorList>
    </citation>
    <scope>NUCLEOTIDE SEQUENCE [LARGE SCALE MRNA] OF 1-1024</scope>
    <scope>VARIANT LEU-554</scope>
    <source>
        <tissue>Muscle</tissue>
        <tissue>Skin</tissue>
        <tissue>Uterus</tissue>
    </source>
</reference>
<reference key="3">
    <citation type="journal article" date="2004" name="Nat. Genet.">
        <title>Complete sequencing and characterization of 21,243 full-length human cDNAs.</title>
        <authorList>
            <person name="Ota T."/>
            <person name="Suzuki Y."/>
            <person name="Nishikawa T."/>
            <person name="Otsuki T."/>
            <person name="Sugiyama T."/>
            <person name="Irie R."/>
            <person name="Wakamatsu A."/>
            <person name="Hayashi K."/>
            <person name="Sato H."/>
            <person name="Nagai K."/>
            <person name="Kimura K."/>
            <person name="Makita H."/>
            <person name="Sekine M."/>
            <person name="Obayashi M."/>
            <person name="Nishi T."/>
            <person name="Shibahara T."/>
            <person name="Tanaka T."/>
            <person name="Ishii S."/>
            <person name="Yamamoto J."/>
            <person name="Saito K."/>
            <person name="Kawai Y."/>
            <person name="Isono Y."/>
            <person name="Nakamura Y."/>
            <person name="Nagahari K."/>
            <person name="Murakami K."/>
            <person name="Yasuda T."/>
            <person name="Iwayanagi T."/>
            <person name="Wagatsuma M."/>
            <person name="Shiratori A."/>
            <person name="Sudo H."/>
            <person name="Hosoiri T."/>
            <person name="Kaku Y."/>
            <person name="Kodaira H."/>
            <person name="Kondo H."/>
            <person name="Sugawara M."/>
            <person name="Takahashi M."/>
            <person name="Kanda K."/>
            <person name="Yokoi T."/>
            <person name="Furuya T."/>
            <person name="Kikkawa E."/>
            <person name="Omura Y."/>
            <person name="Abe K."/>
            <person name="Kamihara K."/>
            <person name="Katsuta N."/>
            <person name="Sato K."/>
            <person name="Tanikawa M."/>
            <person name="Yamazaki M."/>
            <person name="Ninomiya K."/>
            <person name="Ishibashi T."/>
            <person name="Yamashita H."/>
            <person name="Murakawa K."/>
            <person name="Fujimori K."/>
            <person name="Tanai H."/>
            <person name="Kimata M."/>
            <person name="Watanabe M."/>
            <person name="Hiraoka S."/>
            <person name="Chiba Y."/>
            <person name="Ishida S."/>
            <person name="Ono Y."/>
            <person name="Takiguchi S."/>
            <person name="Watanabe S."/>
            <person name="Yosida M."/>
            <person name="Hotuta T."/>
            <person name="Kusano J."/>
            <person name="Kanehori K."/>
            <person name="Takahashi-Fujii A."/>
            <person name="Hara H."/>
            <person name="Tanase T.-O."/>
            <person name="Nomura Y."/>
            <person name="Togiya S."/>
            <person name="Komai F."/>
            <person name="Hara R."/>
            <person name="Takeuchi K."/>
            <person name="Arita M."/>
            <person name="Imose N."/>
            <person name="Musashino K."/>
            <person name="Yuuki H."/>
            <person name="Oshima A."/>
            <person name="Sasaki N."/>
            <person name="Aotsuka S."/>
            <person name="Yoshikawa Y."/>
            <person name="Matsunawa H."/>
            <person name="Ichihara T."/>
            <person name="Shiohata N."/>
            <person name="Sano S."/>
            <person name="Moriya S."/>
            <person name="Momiyama H."/>
            <person name="Satoh N."/>
            <person name="Takami S."/>
            <person name="Terashima Y."/>
            <person name="Suzuki O."/>
            <person name="Nakagawa S."/>
            <person name="Senoh A."/>
            <person name="Mizoguchi H."/>
            <person name="Goto Y."/>
            <person name="Shimizu F."/>
            <person name="Wakebe H."/>
            <person name="Hishigaki H."/>
            <person name="Watanabe T."/>
            <person name="Sugiyama A."/>
            <person name="Takemoto M."/>
            <person name="Kawakami B."/>
            <person name="Yamazaki M."/>
            <person name="Watanabe K."/>
            <person name="Kumagai A."/>
            <person name="Itakura S."/>
            <person name="Fukuzumi Y."/>
            <person name="Fujimori Y."/>
            <person name="Komiyama M."/>
            <person name="Tashiro H."/>
            <person name="Tanigami A."/>
            <person name="Fujiwara T."/>
            <person name="Ono T."/>
            <person name="Yamada K."/>
            <person name="Fujii Y."/>
            <person name="Ozaki K."/>
            <person name="Hirao M."/>
            <person name="Ohmori Y."/>
            <person name="Kawabata A."/>
            <person name="Hikiji T."/>
            <person name="Kobatake N."/>
            <person name="Inagaki H."/>
            <person name="Ikema Y."/>
            <person name="Okamoto S."/>
            <person name="Okitani R."/>
            <person name="Kawakami T."/>
            <person name="Noguchi S."/>
            <person name="Itoh T."/>
            <person name="Shigeta K."/>
            <person name="Senba T."/>
            <person name="Matsumura K."/>
            <person name="Nakajima Y."/>
            <person name="Mizuno T."/>
            <person name="Morinaga M."/>
            <person name="Sasaki M."/>
            <person name="Togashi T."/>
            <person name="Oyama M."/>
            <person name="Hata H."/>
            <person name="Watanabe M."/>
            <person name="Komatsu T."/>
            <person name="Mizushima-Sugano J."/>
            <person name="Satoh T."/>
            <person name="Shirai Y."/>
            <person name="Takahashi Y."/>
            <person name="Nakagawa K."/>
            <person name="Okumura K."/>
            <person name="Nagase T."/>
            <person name="Nomura N."/>
            <person name="Kikuchi H."/>
            <person name="Masuho Y."/>
            <person name="Yamashita R."/>
            <person name="Nakai K."/>
            <person name="Yada T."/>
            <person name="Nakamura Y."/>
            <person name="Ohara O."/>
            <person name="Isogai T."/>
            <person name="Sugano S."/>
        </authorList>
    </citation>
    <scope>NUCLEOTIDE SEQUENCE [LARGE SCALE MRNA] OF 1-1019</scope>
    <source>
        <tissue>Brain</tissue>
    </source>
</reference>
<reference key="4">
    <citation type="journal article" date="2006" name="Cell">
        <title>Global, in vivo, and site-specific phosphorylation dynamics in signaling networks.</title>
        <authorList>
            <person name="Olsen J.V."/>
            <person name="Blagoev B."/>
            <person name="Gnad F."/>
            <person name="Macek B."/>
            <person name="Kumar C."/>
            <person name="Mortensen P."/>
            <person name="Mann M."/>
        </authorList>
    </citation>
    <scope>IDENTIFICATION BY MASS SPECTROMETRY [LARGE SCALE ANALYSIS]</scope>
    <source>
        <tissue>Cervix carcinoma</tissue>
    </source>
</reference>
<reference key="5">
    <citation type="journal article" date="2008" name="Proc. Natl. Acad. Sci. U.S.A.">
        <title>A quantitative atlas of mitotic phosphorylation.</title>
        <authorList>
            <person name="Dephoure N."/>
            <person name="Zhou C."/>
            <person name="Villen J."/>
            <person name="Beausoleil S.A."/>
            <person name="Bakalarski C.E."/>
            <person name="Elledge S.J."/>
            <person name="Gygi S.P."/>
        </authorList>
    </citation>
    <scope>PHOSPHORYLATION [LARGE SCALE ANALYSIS] AT SER-461; THR-704 AND THR-715</scope>
    <scope>IDENTIFICATION BY MASS SPECTROMETRY [LARGE SCALE ANALYSIS]</scope>
    <source>
        <tissue>Cervix carcinoma</tissue>
    </source>
</reference>
<reference key="6">
    <citation type="journal article" date="2009" name="Anal. Chem.">
        <title>Lys-N and trypsin cover complementary parts of the phosphoproteome in a refined SCX-based approach.</title>
        <authorList>
            <person name="Gauci S."/>
            <person name="Helbig A.O."/>
            <person name="Slijper M."/>
            <person name="Krijgsveld J."/>
            <person name="Heck A.J."/>
            <person name="Mohammed S."/>
        </authorList>
    </citation>
    <scope>ACETYLATION [LARGE SCALE ANALYSIS] AT MET-1</scope>
    <scope>IDENTIFICATION BY MASS SPECTROMETRY [LARGE SCALE ANALYSIS]</scope>
</reference>
<reference key="7">
    <citation type="journal article" date="2009" name="Sci. Signal.">
        <title>Quantitative phosphoproteomic analysis of T cell receptor signaling reveals system-wide modulation of protein-protein interactions.</title>
        <authorList>
            <person name="Mayya V."/>
            <person name="Lundgren D.H."/>
            <person name="Hwang S.-I."/>
            <person name="Rezaul K."/>
            <person name="Wu L."/>
            <person name="Eng J.K."/>
            <person name="Rodionov V."/>
            <person name="Han D.K."/>
        </authorList>
    </citation>
    <scope>PHOSPHORYLATION [LARGE SCALE ANALYSIS] AT SER-461; THR-655; SER-661; THR-704; SER-709 AND THR-715</scope>
    <scope>IDENTIFICATION BY MASS SPECTROMETRY [LARGE SCALE ANALYSIS]</scope>
    <source>
        <tissue>Leukemic T-cell</tissue>
    </source>
</reference>
<reference key="8">
    <citation type="journal article" date="2010" name="Sci. Signal.">
        <title>Quantitative phosphoproteomics reveals widespread full phosphorylation site occupancy during mitosis.</title>
        <authorList>
            <person name="Olsen J.V."/>
            <person name="Vermeulen M."/>
            <person name="Santamaria A."/>
            <person name="Kumar C."/>
            <person name="Miller M.L."/>
            <person name="Jensen L.J."/>
            <person name="Gnad F."/>
            <person name="Cox J."/>
            <person name="Jensen T.S."/>
            <person name="Nigg E.A."/>
            <person name="Brunak S."/>
            <person name="Mann M."/>
        </authorList>
    </citation>
    <scope>PHOSPHORYLATION [LARGE SCALE ANALYSIS] AT SER-461</scope>
    <scope>IDENTIFICATION BY MASS SPECTROMETRY [LARGE SCALE ANALYSIS]</scope>
    <source>
        <tissue>Cervix carcinoma</tissue>
    </source>
</reference>
<reference key="9">
    <citation type="journal article" date="2011" name="PLoS Genet.">
        <title>Nuclear cGMP-dependent kinase regulates gene expression via activity-dependent recruitment of a conserved histone deacetylase complex.</title>
        <authorList>
            <person name="Hao Y."/>
            <person name="Xu N."/>
            <person name="Box A.C."/>
            <person name="Schaefer L."/>
            <person name="Kannan K."/>
            <person name="Zhang Y."/>
            <person name="Florens L."/>
            <person name="Seidel C."/>
            <person name="Washburn M.P."/>
            <person name="Wiegraebe W."/>
            <person name="Mak H.Y."/>
        </authorList>
    </citation>
    <scope>INTERACTION WITH DNTTIP1</scope>
    <scope>IDENTIFICATION BY MASS SPECTROMETRY</scope>
</reference>
<reference key="10">
    <citation type="journal article" date="2011" name="Sci. Signal.">
        <title>System-wide temporal characterization of the proteome and phosphoproteome of human embryonic stem cell differentiation.</title>
        <authorList>
            <person name="Rigbolt K.T."/>
            <person name="Prokhorova T.A."/>
            <person name="Akimov V."/>
            <person name="Henningsen J."/>
            <person name="Johansen P.T."/>
            <person name="Kratchmarova I."/>
            <person name="Kassem M."/>
            <person name="Mann M."/>
            <person name="Olsen J.V."/>
            <person name="Blagoev B."/>
        </authorList>
    </citation>
    <scope>PHOSPHORYLATION [LARGE SCALE ANALYSIS] AT SER-461</scope>
    <scope>IDENTIFICATION BY MASS SPECTROMETRY [LARGE SCALE ANALYSIS]</scope>
</reference>
<reference key="11">
    <citation type="journal article" date="2012" name="Proc. Natl. Acad. Sci. U.S.A.">
        <title>N-terminal acetylome analyses and functional insights of the N-terminal acetyltransferase NatB.</title>
        <authorList>
            <person name="Van Damme P."/>
            <person name="Lasa M."/>
            <person name="Polevoda B."/>
            <person name="Gazquez C."/>
            <person name="Elosegui-Artola A."/>
            <person name="Kim D.S."/>
            <person name="De Juan-Pardo E."/>
            <person name="Demeyer K."/>
            <person name="Hole K."/>
            <person name="Larrea E."/>
            <person name="Timmerman E."/>
            <person name="Prieto J."/>
            <person name="Arnesen T."/>
            <person name="Sherman F."/>
            <person name="Gevaert K."/>
            <person name="Aldabe R."/>
        </authorList>
    </citation>
    <scope>ACETYLATION [LARGE SCALE ANALYSIS] AT MET-1</scope>
    <scope>IDENTIFICATION BY MASS SPECTROMETRY [LARGE SCALE ANALYSIS]</scope>
</reference>
<reference key="12">
    <citation type="journal article" date="2013" name="J. Proteome Res.">
        <title>Toward a comprehensive characterization of a human cancer cell phosphoproteome.</title>
        <authorList>
            <person name="Zhou H."/>
            <person name="Di Palma S."/>
            <person name="Preisinger C."/>
            <person name="Peng M."/>
            <person name="Polat A.N."/>
            <person name="Heck A.J."/>
            <person name="Mohammed S."/>
        </authorList>
    </citation>
    <scope>PHOSPHORYLATION [LARGE SCALE ANALYSIS] AT SER-461 AND SER-923</scope>
    <scope>IDENTIFICATION BY MASS SPECTROMETRY [LARGE SCALE ANALYSIS]</scope>
    <source>
        <tissue>Cervix carcinoma</tissue>
        <tissue>Erythroleukemia</tissue>
    </source>
</reference>
<reference key="13">
    <citation type="journal article" date="2014" name="J. Proteomics">
        <title>An enzyme assisted RP-RPLC approach for in-depth analysis of human liver phosphoproteome.</title>
        <authorList>
            <person name="Bian Y."/>
            <person name="Song C."/>
            <person name="Cheng K."/>
            <person name="Dong M."/>
            <person name="Wang F."/>
            <person name="Huang J."/>
            <person name="Sun D."/>
            <person name="Wang L."/>
            <person name="Ye M."/>
            <person name="Zou H."/>
        </authorList>
    </citation>
    <scope>PHOSPHORYLATION [LARGE SCALE ANALYSIS] AT THR-704 AND THR-715</scope>
    <scope>IDENTIFICATION BY MASS SPECTROMETRY [LARGE SCALE ANALYSIS]</scope>
    <source>
        <tissue>Liver</tissue>
    </source>
</reference>
<reference key="14">
    <citation type="journal article" date="2014" name="Mol. Cell. Proteomics">
        <title>Immunoaffinity enrichment and mass spectrometry analysis of protein methylation.</title>
        <authorList>
            <person name="Guo A."/>
            <person name="Gu H."/>
            <person name="Zhou J."/>
            <person name="Mulhern D."/>
            <person name="Wang Y."/>
            <person name="Lee K.A."/>
            <person name="Yang V."/>
            <person name="Aguiar M."/>
            <person name="Kornhauser J."/>
            <person name="Jia X."/>
            <person name="Ren J."/>
            <person name="Beausoleil S.A."/>
            <person name="Silva J.C."/>
            <person name="Vemulapalli V."/>
            <person name="Bedford M.T."/>
            <person name="Comb M.J."/>
        </authorList>
    </citation>
    <scope>METHYLATION [LARGE SCALE ANALYSIS] AT ARG-193 AND ARG-447</scope>
    <scope>IDENTIFICATION BY MASS SPECTROMETRY [LARGE SCALE ANALYSIS]</scope>
    <source>
        <tissue>Colon carcinoma</tissue>
    </source>
</reference>
<reference key="15">
    <citation type="journal article" date="2014" name="Proc. Natl. Acad. Sci. U.S.A.">
        <title>Mapping of SUMO sites and analysis of SUMOylation changes induced by external stimuli.</title>
        <authorList>
            <person name="Impens F."/>
            <person name="Radoshevich L."/>
            <person name="Cossart P."/>
            <person name="Ribet D."/>
        </authorList>
    </citation>
    <scope>SUMOYLATION [LARGE SCALE ANALYSIS] AT LYS-590</scope>
    <scope>IDENTIFICATION BY MASS SPECTROMETRY [LARGE SCALE ANALYSIS]</scope>
</reference>
<reference key="16">
    <citation type="journal article" date="2015" name="Nucleic Acids Res.">
        <title>Structural and functional characterization of a cell cycle associated HDAC1/2 complex reveals the structural basis for complex assembly and nucleosome targeting.</title>
        <authorList>
            <person name="Itoh T."/>
            <person name="Fairall L."/>
            <person name="Muskett F.W."/>
            <person name="Milano C.P."/>
            <person name="Watson P.J."/>
            <person name="Arnaudo N."/>
            <person name="Saleh A."/>
            <person name="Millard C.J."/>
            <person name="El-Mezgueldi M."/>
            <person name="Martino F."/>
            <person name="Schwabe J.W."/>
        </authorList>
    </citation>
    <scope>INTERACTION WITH DNTTIP1</scope>
    <scope>SUBUNIT</scope>
    <scope>IDENTIFICATION BY MASS SPECTROMETRY</scope>
</reference>
<reference key="17">
    <citation type="journal article" date="2017" name="Nat. Struct. Mol. Biol.">
        <title>Site-specific mapping of the human SUMO proteome reveals co-modification with phosphorylation.</title>
        <authorList>
            <person name="Hendriks I.A."/>
            <person name="Lyon D."/>
            <person name="Young C."/>
            <person name="Jensen L.J."/>
            <person name="Vertegaal A.C."/>
            <person name="Nielsen M.L."/>
        </authorList>
    </citation>
    <scope>SUMOYLATION [LARGE SCALE ANALYSIS] AT LYS-166 AND LYS-590</scope>
    <scope>IDENTIFICATION BY MASS SPECTROMETRY [LARGE SCALE ANALYSIS]</scope>
</reference>
<evidence type="ECO:0000255" key="1">
    <source>
        <dbReference type="PROSITE-ProRule" id="PRU00512"/>
    </source>
</evidence>
<evidence type="ECO:0000255" key="2">
    <source>
        <dbReference type="PROSITE-ProRule" id="PRU00624"/>
    </source>
</evidence>
<evidence type="ECO:0000256" key="3">
    <source>
        <dbReference type="SAM" id="MobiDB-lite"/>
    </source>
</evidence>
<evidence type="ECO:0000269" key="4">
    <source>
    </source>
</evidence>
<evidence type="ECO:0000269" key="5">
    <source>
    </source>
</evidence>
<evidence type="ECO:0000269" key="6">
    <source>
    </source>
</evidence>
<evidence type="ECO:0000303" key="7">
    <source>
    </source>
</evidence>
<evidence type="ECO:0000305" key="8"/>
<evidence type="ECO:0000312" key="9">
    <source>
        <dbReference type="HGNC" id="HGNC:19853"/>
    </source>
</evidence>
<evidence type="ECO:0007744" key="10">
    <source>
    </source>
</evidence>
<evidence type="ECO:0007744" key="11">
    <source>
    </source>
</evidence>
<evidence type="ECO:0007744" key="12">
    <source>
    </source>
</evidence>
<evidence type="ECO:0007744" key="13">
    <source>
    </source>
</evidence>
<evidence type="ECO:0007744" key="14">
    <source>
    </source>
</evidence>
<evidence type="ECO:0007744" key="15">
    <source>
    </source>
</evidence>
<evidence type="ECO:0007744" key="16">
    <source>
    </source>
</evidence>
<evidence type="ECO:0007744" key="17">
    <source>
    </source>
</evidence>
<evidence type="ECO:0007744" key="18">
    <source>
    </source>
</evidence>
<evidence type="ECO:0007744" key="19">
    <source>
    </source>
</evidence>
<evidence type="ECO:0007744" key="20">
    <source>
    </source>
</evidence>
<keyword id="KW-0002">3D-structure</keyword>
<keyword id="KW-0007">Acetylation</keyword>
<keyword id="KW-0238">DNA-binding</keyword>
<keyword id="KW-1017">Isopeptide bond</keyword>
<keyword id="KW-0488">Methylation</keyword>
<keyword id="KW-0539">Nucleus</keyword>
<keyword id="KW-0597">Phosphoprotein</keyword>
<keyword id="KW-1267">Proteomics identification</keyword>
<keyword id="KW-1185">Reference proteome</keyword>
<keyword id="KW-0804">Transcription</keyword>
<keyword id="KW-0805">Transcription regulation</keyword>
<keyword id="KW-0832">Ubl conjugation</keyword>
<name>MDEAS_HUMAN</name>
<dbReference type="EMBL" id="AC006146">
    <property type="status" value="NOT_ANNOTATED_CDS"/>
    <property type="molecule type" value="Genomic_DNA"/>
</dbReference>
<dbReference type="EMBL" id="BC006511">
    <property type="protein sequence ID" value="AAH06511.1"/>
    <property type="status" value="ALT_INIT"/>
    <property type="molecule type" value="mRNA"/>
</dbReference>
<dbReference type="EMBL" id="BC009202">
    <property type="protein sequence ID" value="AAH09202.1"/>
    <property type="molecule type" value="mRNA"/>
</dbReference>
<dbReference type="EMBL" id="BC015668">
    <property type="protein sequence ID" value="AAH15668.1"/>
    <property type="molecule type" value="mRNA"/>
</dbReference>
<dbReference type="EMBL" id="AK127785">
    <property type="status" value="NOT_ANNOTATED_CDS"/>
    <property type="molecule type" value="mRNA"/>
</dbReference>
<dbReference type="CCDS" id="CCDS9819.1"/>
<dbReference type="RefSeq" id="NP_001036783.1">
    <property type="nucleotide sequence ID" value="NM_001043318.3"/>
</dbReference>
<dbReference type="RefSeq" id="NP_919254.2">
    <property type="nucleotide sequence ID" value="NM_194278.3"/>
</dbReference>
<dbReference type="PDB" id="6Z2J">
    <property type="method" value="EM"/>
    <property type="resolution" value="4.00 A"/>
    <property type="chains" value="D/F=717-887"/>
</dbReference>
<dbReference type="PDB" id="6Z2K">
    <property type="method" value="EM"/>
    <property type="resolution" value="4.50 A"/>
    <property type="chains" value="D/F/J/L=717-887"/>
</dbReference>
<dbReference type="PDBsum" id="6Z2J"/>
<dbReference type="PDBsum" id="6Z2K"/>
<dbReference type="EMDB" id="EMD-11041"/>
<dbReference type="EMDB" id="EMD-11042"/>
<dbReference type="SMR" id="Q6PJG2"/>
<dbReference type="BioGRID" id="124872">
    <property type="interactions" value="109"/>
</dbReference>
<dbReference type="ComplexPortal" id="CPX-2867">
    <property type="entry name" value="MiDAC histone deacetylase complex, HDAC2 variant"/>
</dbReference>
<dbReference type="ComplexPortal" id="CPX-2874">
    <property type="entry name" value="MiDAC histone deacetylase complex, HDAC1 variant"/>
</dbReference>
<dbReference type="CORUM" id="Q6PJG2"/>
<dbReference type="FunCoup" id="Q6PJG2">
    <property type="interactions" value="1616"/>
</dbReference>
<dbReference type="IntAct" id="Q6PJG2">
    <property type="interactions" value="74"/>
</dbReference>
<dbReference type="MINT" id="Q6PJG2"/>
<dbReference type="STRING" id="9606.ENSP00000286523"/>
<dbReference type="GlyCosmos" id="Q6PJG2">
    <property type="glycosylation" value="10 sites, 2 glycans"/>
</dbReference>
<dbReference type="GlyGen" id="Q6PJG2">
    <property type="glycosylation" value="10 sites, 2 O-linked glycans (10 sites)"/>
</dbReference>
<dbReference type="iPTMnet" id="Q6PJG2"/>
<dbReference type="MetOSite" id="Q6PJG2"/>
<dbReference type="PhosphoSitePlus" id="Q6PJG2"/>
<dbReference type="SwissPalm" id="Q6PJG2"/>
<dbReference type="BioMuta" id="ELMSAN1"/>
<dbReference type="DMDM" id="118572229"/>
<dbReference type="jPOST" id="Q6PJG2"/>
<dbReference type="MassIVE" id="Q6PJG2"/>
<dbReference type="PaxDb" id="9606-ENSP00000286523"/>
<dbReference type="PeptideAtlas" id="Q6PJG2"/>
<dbReference type="ProteomicsDB" id="67201"/>
<dbReference type="Pumba" id="Q6PJG2"/>
<dbReference type="Antibodypedia" id="167">
    <property type="antibodies" value="26 antibodies from 13 providers"/>
</dbReference>
<dbReference type="DNASU" id="91748"/>
<dbReference type="Ensembl" id="ENST00000286523.9">
    <property type="protein sequence ID" value="ENSP00000286523.5"/>
    <property type="gene ID" value="ENSG00000156030.14"/>
</dbReference>
<dbReference type="Ensembl" id="ENST00000394071.6">
    <property type="protein sequence ID" value="ENSP00000377634.2"/>
    <property type="gene ID" value="ENSG00000156030.14"/>
</dbReference>
<dbReference type="GeneID" id="91748"/>
<dbReference type="KEGG" id="hsa:91748"/>
<dbReference type="UCSC" id="uc001xot.4">
    <property type="organism name" value="human"/>
</dbReference>
<dbReference type="AGR" id="HGNC:19853"/>
<dbReference type="CTD" id="91748"/>
<dbReference type="DisGeNET" id="91748"/>
<dbReference type="GeneCards" id="MIDEAS"/>
<dbReference type="HGNC" id="HGNC:19853">
    <property type="gene designation" value="MIDEAS"/>
</dbReference>
<dbReference type="HPA" id="ENSG00000156030">
    <property type="expression patterns" value="Low tissue specificity"/>
</dbReference>
<dbReference type="MIM" id="621074">
    <property type="type" value="gene"/>
</dbReference>
<dbReference type="neXtProt" id="NX_Q6PJG2"/>
<dbReference type="OpenTargets" id="ENSG00000156030"/>
<dbReference type="VEuPathDB" id="HostDB:ENSG00000156030"/>
<dbReference type="eggNOG" id="KOG4167">
    <property type="taxonomic scope" value="Eukaryota"/>
</dbReference>
<dbReference type="GeneTree" id="ENSGT00940000157459"/>
<dbReference type="HOGENOM" id="CLU_011395_0_0_1"/>
<dbReference type="InParanoid" id="Q6PJG2"/>
<dbReference type="OMA" id="TAKCGVE"/>
<dbReference type="OrthoDB" id="10258692at2759"/>
<dbReference type="PAN-GO" id="Q6PJG2">
    <property type="GO annotations" value="6 GO annotations based on evolutionary models"/>
</dbReference>
<dbReference type="PhylomeDB" id="Q6PJG2"/>
<dbReference type="TreeFam" id="TF106431"/>
<dbReference type="PathwayCommons" id="Q6PJG2"/>
<dbReference type="SignaLink" id="Q6PJG2"/>
<dbReference type="BioGRID-ORCS" id="91748">
    <property type="hits" value="39 hits in 1172 CRISPR screens"/>
</dbReference>
<dbReference type="ChiTaRS" id="ELMSAN1">
    <property type="organism name" value="human"/>
</dbReference>
<dbReference type="GenomeRNAi" id="91748"/>
<dbReference type="Pharos" id="Q6PJG2">
    <property type="development level" value="Tdark"/>
</dbReference>
<dbReference type="PRO" id="PR:Q6PJG2"/>
<dbReference type="Proteomes" id="UP000005640">
    <property type="component" value="Chromosome 14"/>
</dbReference>
<dbReference type="RNAct" id="Q6PJG2">
    <property type="molecule type" value="protein"/>
</dbReference>
<dbReference type="Bgee" id="ENSG00000156030">
    <property type="expression patterns" value="Expressed in sural nerve and 181 other cell types or tissues"/>
</dbReference>
<dbReference type="ExpressionAtlas" id="Q6PJG2">
    <property type="expression patterns" value="baseline and differential"/>
</dbReference>
<dbReference type="GO" id="GO:0000118">
    <property type="term" value="C:histone deacetylase complex"/>
    <property type="evidence" value="ECO:0000318"/>
    <property type="project" value="GO_Central"/>
</dbReference>
<dbReference type="GO" id="GO:0005654">
    <property type="term" value="C:nucleoplasm"/>
    <property type="evidence" value="ECO:0000314"/>
    <property type="project" value="HPA"/>
</dbReference>
<dbReference type="GO" id="GO:0005667">
    <property type="term" value="C:transcription regulator complex"/>
    <property type="evidence" value="ECO:0000318"/>
    <property type="project" value="GO_Central"/>
</dbReference>
<dbReference type="GO" id="GO:0003677">
    <property type="term" value="F:DNA binding"/>
    <property type="evidence" value="ECO:0007669"/>
    <property type="project" value="UniProtKB-KW"/>
</dbReference>
<dbReference type="GO" id="GO:0003714">
    <property type="term" value="F:transcription corepressor activity"/>
    <property type="evidence" value="ECO:0000318"/>
    <property type="project" value="GO_Central"/>
</dbReference>
<dbReference type="GO" id="GO:0045892">
    <property type="term" value="P:negative regulation of DNA-templated transcription"/>
    <property type="evidence" value="ECO:0000318"/>
    <property type="project" value="GO_Central"/>
</dbReference>
<dbReference type="GO" id="GO:0006357">
    <property type="term" value="P:regulation of transcription by RNA polymerase II"/>
    <property type="evidence" value="ECO:0000318"/>
    <property type="project" value="GO_Central"/>
</dbReference>
<dbReference type="FunFam" id="1.10.10.60:FF:000086">
    <property type="entry name" value="transcriptional-regulating factor 1 isoform X1"/>
    <property type="match status" value="1"/>
</dbReference>
<dbReference type="Gene3D" id="1.10.10.60">
    <property type="entry name" value="Homeodomain-like"/>
    <property type="match status" value="1"/>
</dbReference>
<dbReference type="InterPro" id="IPR000949">
    <property type="entry name" value="ELM2_dom"/>
</dbReference>
<dbReference type="InterPro" id="IPR009057">
    <property type="entry name" value="Homeodomain-like_sf"/>
</dbReference>
<dbReference type="InterPro" id="IPR001005">
    <property type="entry name" value="SANT/Myb"/>
</dbReference>
<dbReference type="InterPro" id="IPR017884">
    <property type="entry name" value="SANT_dom"/>
</dbReference>
<dbReference type="InterPro" id="IPR051066">
    <property type="entry name" value="Trans_reg/Corepressor"/>
</dbReference>
<dbReference type="PANTHER" id="PTHR16089:SF24">
    <property type="entry name" value="MITOTIC DEACETYLASE-ASSOCIATED SANT DOMAIN PROTEIN"/>
    <property type="match status" value="1"/>
</dbReference>
<dbReference type="PANTHER" id="PTHR16089">
    <property type="entry name" value="REST COREPRESSOR COREST PROTEIN-RELATED"/>
    <property type="match status" value="1"/>
</dbReference>
<dbReference type="Pfam" id="PF01448">
    <property type="entry name" value="ELM2"/>
    <property type="match status" value="1"/>
</dbReference>
<dbReference type="SMART" id="SM01189">
    <property type="entry name" value="ELM2"/>
    <property type="match status" value="1"/>
</dbReference>
<dbReference type="SMART" id="SM00717">
    <property type="entry name" value="SANT"/>
    <property type="match status" value="1"/>
</dbReference>
<dbReference type="SUPFAM" id="SSF46689">
    <property type="entry name" value="Homeodomain-like"/>
    <property type="match status" value="1"/>
</dbReference>
<dbReference type="PROSITE" id="PS51156">
    <property type="entry name" value="ELM2"/>
    <property type="match status" value="1"/>
</dbReference>
<dbReference type="PROSITE" id="PS51293">
    <property type="entry name" value="SANT"/>
    <property type="match status" value="1"/>
</dbReference>
<organism>
    <name type="scientific">Homo sapiens</name>
    <name type="common">Human</name>
    <dbReference type="NCBI Taxonomy" id="9606"/>
    <lineage>
        <taxon>Eukaryota</taxon>
        <taxon>Metazoa</taxon>
        <taxon>Chordata</taxon>
        <taxon>Craniata</taxon>
        <taxon>Vertebrata</taxon>
        <taxon>Euteleostomi</taxon>
        <taxon>Mammalia</taxon>
        <taxon>Eutheria</taxon>
        <taxon>Euarchontoglires</taxon>
        <taxon>Primates</taxon>
        <taxon>Haplorrhini</taxon>
        <taxon>Catarrhini</taxon>
        <taxon>Hominidae</taxon>
        <taxon>Homo</taxon>
    </lineage>
</organism>
<sequence length="1045" mass="114989">MNLQAQPKAQNKRKRCLFGGQEPAPKEQPPPLQPPQQSIRVKEEQYLGHEGPGGAVSTSQPVELPPPSSLALLNSVVYGPERTSAAMLSQQVASVKWPNSVMAPGRGPERGGGGGVSDSSWQQQPGQPPPHSTWNCHSLSLYSATKGSPHPGVGVPTYYNHPEALKREKAGGPQLDRYVRPMMPQKVQLEVGRPQAPLNSFHAAKKPPNQSLPLQPFQLAFGHQVNRQVFRQGPPPPNPVAAFPPQKQQQQQQPQQQQQQQQAALPQMPLFENFYSMPQQPSQQPQDFGLQPAGPLGQSHLAHHSMAPYPFPPNPDMNPELRKALLQDSAPQPALPQVQIPFPRRSRRLSKEGILPPSALDGAGTQPGQEATGNLFLHHWPLQQPPPGSLGQPHPEALGFPLELRESQLLPDGERLAPNGREREAPAMGSEEGMRAVSTGDCGQVLRGGVIQSTRRRRRASQEANLLTLAQKAVELASLQNAKDGSGSEEKRKSVLASTTKCGVEFSEPSLATKRAREDSGMVPLIIPVSVPVRTVDPTEAAQAGGLDEDGKGPEQNPAEHKPSVIVTRRRSTRIPGTDAQAQAEDMNVKLEGEPSVRKPKQRPRPEPLIIPTKAGTFIAPPVYSNITPYQSHLRSPVRLADHPSERSFELPPYTPPPILSPVREGSGLYFNAIISTSTIPAPPPITPKSAHRTLLRTNSAEVTPPVLSVMGEATPVSIEPRINVGSRFQAEIPLMRDRALAAADPHKADLVWQPWEDLESSREKQRQVEDLLTAACSSIFPGAGTNQELALHCLHESRGDILETLNKLLLKKPLRPHNHPLATYHYTGSDQWKMAERKLFNKGIAIYKKDFFLVQKLIQTKTVAQCVEFYYTYKKQVKIGRNGTLTFGDVDTSDEKSAQEEVEVDIKTSQKFPRVPLPRRESPSEERLEPKREVKEPRKEGEEEVPEIQEKEEQEEGRERSRRAAAVKATQTLQANESASDILILRSHESNAPGSAGGQASEKPREGTGKSRRALPFSEKKKKTETFSKTQNQENTFPCKKCGR</sequence>
<feature type="chain" id="PRO_0000259764" description="Mitotic deacetylase-associated SANT domain protein">
    <location>
        <begin position="1"/>
        <end position="1045"/>
    </location>
</feature>
<feature type="domain" description="ELM2" evidence="1">
    <location>
        <begin position="721"/>
        <end position="813"/>
    </location>
</feature>
<feature type="domain" description="SANT" evidence="2">
    <location>
        <begin position="828"/>
        <end position="879"/>
    </location>
</feature>
<feature type="region of interest" description="Disordered" evidence="3">
    <location>
        <begin position="1"/>
        <end position="68"/>
    </location>
</feature>
<feature type="region of interest" description="Disordered" evidence="3">
    <location>
        <begin position="99"/>
        <end position="159"/>
    </location>
</feature>
<feature type="region of interest" description="Disordered" evidence="3">
    <location>
        <begin position="228"/>
        <end position="264"/>
    </location>
</feature>
<feature type="region of interest" description="Disordered" evidence="3">
    <location>
        <begin position="276"/>
        <end position="305"/>
    </location>
</feature>
<feature type="region of interest" description="Disordered" evidence="3">
    <location>
        <begin position="330"/>
        <end position="349"/>
    </location>
</feature>
<feature type="region of interest" description="Disordered" evidence="3">
    <location>
        <begin position="378"/>
        <end position="397"/>
    </location>
</feature>
<feature type="region of interest" description="Disordered" evidence="3">
    <location>
        <begin position="410"/>
        <end position="441"/>
    </location>
</feature>
<feature type="region of interest" description="Disordered" evidence="3">
    <location>
        <begin position="543"/>
        <end position="563"/>
    </location>
</feature>
<feature type="region of interest" description="Disordered" evidence="3">
    <location>
        <begin position="887"/>
        <end position="1045"/>
    </location>
</feature>
<feature type="compositionally biased region" description="Polar residues" evidence="3">
    <location>
        <begin position="132"/>
        <end position="146"/>
    </location>
</feature>
<feature type="compositionally biased region" description="Low complexity" evidence="3">
    <location>
        <begin position="240"/>
        <end position="264"/>
    </location>
</feature>
<feature type="compositionally biased region" description="Basic and acidic residues" evidence="3">
    <location>
        <begin position="412"/>
        <end position="425"/>
    </location>
</feature>
<feature type="compositionally biased region" description="Basic and acidic residues" evidence="3">
    <location>
        <begin position="549"/>
        <end position="563"/>
    </location>
</feature>
<feature type="compositionally biased region" description="Basic and acidic residues" evidence="3">
    <location>
        <begin position="894"/>
        <end position="909"/>
    </location>
</feature>
<feature type="compositionally biased region" description="Basic and acidic residues" evidence="3">
    <location>
        <begin position="919"/>
        <end position="942"/>
    </location>
</feature>
<feature type="compositionally biased region" description="Acidic residues" evidence="3">
    <location>
        <begin position="943"/>
        <end position="957"/>
    </location>
</feature>
<feature type="compositionally biased region" description="Polar residues" evidence="3">
    <location>
        <begin position="970"/>
        <end position="980"/>
    </location>
</feature>
<feature type="modified residue" description="N-acetylmethionine" evidence="11 15">
    <location>
        <position position="1"/>
    </location>
</feature>
<feature type="modified residue" description="Asymmetric dimethylarginine" evidence="17">
    <location>
        <position position="193"/>
    </location>
</feature>
<feature type="modified residue" description="Omega-N-methylarginine" evidence="17">
    <location>
        <position position="447"/>
    </location>
</feature>
<feature type="modified residue" description="Phosphoserine" evidence="10 12 13 14 16">
    <location>
        <position position="461"/>
    </location>
</feature>
<feature type="modified residue" description="Phosphothreonine" evidence="12">
    <location>
        <position position="655"/>
    </location>
</feature>
<feature type="modified residue" description="Phosphoserine" evidence="12">
    <location>
        <position position="661"/>
    </location>
</feature>
<feature type="modified residue" description="Phosphothreonine" evidence="10 12 18">
    <location>
        <position position="704"/>
    </location>
</feature>
<feature type="modified residue" description="Phosphoserine" evidence="12">
    <location>
        <position position="709"/>
    </location>
</feature>
<feature type="modified residue" description="Phosphothreonine" evidence="10 12 18">
    <location>
        <position position="715"/>
    </location>
</feature>
<feature type="modified residue" description="Phosphoserine" evidence="16">
    <location>
        <position position="923"/>
    </location>
</feature>
<feature type="cross-link" description="Glycyl lysine isopeptide (Lys-Gly) (interchain with G-Cter in SUMO2)" evidence="20">
    <location>
        <position position="166"/>
    </location>
</feature>
<feature type="cross-link" description="Glycyl lysine isopeptide (Lys-Gly) (interchain with G-Cter in SUMO1); alternate" evidence="19">
    <location>
        <position position="590"/>
    </location>
</feature>
<feature type="cross-link" description="Glycyl lysine isopeptide (Lys-Gly) (interchain with G-Cter in SUMO2); alternate" evidence="20">
    <location>
        <position position="590"/>
    </location>
</feature>
<feature type="sequence variant" id="VAR_050182" description="In dbSNP:rs35302179.">
    <original>A</original>
    <variation>V</variation>
    <location>
        <position position="86"/>
    </location>
</feature>
<feature type="sequence variant" id="VAR_050183" description="In dbSNP:rs17782124." evidence="4">
    <original>P</original>
    <variation>L</variation>
    <location>
        <position position="554"/>
    </location>
</feature>
<feature type="sequence variant" id="VAR_061361" description="In dbSNP:rs35905570.">
    <original>D</original>
    <variation>N</variation>
    <location>
        <position position="895"/>
    </location>
</feature>
<feature type="sequence conflict" description="In Ref. 2; AAH09202." evidence="8" ref="2">
    <original>N</original>
    <variation>D</variation>
    <location>
        <position position="626"/>
    </location>
</feature>
<feature type="sequence conflict" description="In Ref. 2; AAH09202/AAH15668." evidence="8" ref="2">
    <original>E</original>
    <variation>K</variation>
    <location>
        <position position="1020"/>
    </location>
</feature>
<accession>Q6PJG2</accession>
<accession>Q6PK13</accession>
<accession>Q6PK59</accession>
<accession>Q6ZS23</accession>